<organism>
    <name type="scientific">Mus musculus</name>
    <name type="common">Mouse</name>
    <dbReference type="NCBI Taxonomy" id="10090"/>
    <lineage>
        <taxon>Eukaryota</taxon>
        <taxon>Metazoa</taxon>
        <taxon>Chordata</taxon>
        <taxon>Craniata</taxon>
        <taxon>Vertebrata</taxon>
        <taxon>Euteleostomi</taxon>
        <taxon>Mammalia</taxon>
        <taxon>Eutheria</taxon>
        <taxon>Euarchontoglires</taxon>
        <taxon>Glires</taxon>
        <taxon>Rodentia</taxon>
        <taxon>Myomorpha</taxon>
        <taxon>Muroidea</taxon>
        <taxon>Muridae</taxon>
        <taxon>Murinae</taxon>
        <taxon>Mus</taxon>
        <taxon>Mus</taxon>
    </lineage>
</organism>
<protein>
    <recommendedName>
        <fullName>Potassium channel subfamily T member 2</fullName>
    </recommendedName>
    <alternativeName>
        <fullName>Sequence like an intermediate conductance potassium channel subunit</fullName>
    </alternativeName>
    <alternativeName>
        <fullName>Sodium and chloride-activated ATP-sensitive potassium channel Slo2.1</fullName>
    </alternativeName>
</protein>
<evidence type="ECO:0000250" key="1">
    <source>
        <dbReference type="UniProtKB" id="Q5JUK3"/>
    </source>
</evidence>
<evidence type="ECO:0000250" key="2">
    <source>
        <dbReference type="UniProtKB" id="Q6UVM3"/>
    </source>
</evidence>
<evidence type="ECO:0000250" key="3">
    <source>
        <dbReference type="UniProtKB" id="Q6UVM4"/>
    </source>
</evidence>
<evidence type="ECO:0000255" key="4"/>
<evidence type="ECO:0000255" key="5">
    <source>
        <dbReference type="PROSITE-ProRule" id="PRU00543"/>
    </source>
</evidence>
<evidence type="ECO:0000256" key="6">
    <source>
        <dbReference type="SAM" id="MobiDB-lite"/>
    </source>
</evidence>
<evidence type="ECO:0000269" key="7">
    <source>
    </source>
</evidence>
<evidence type="ECO:0000269" key="8">
    <source>
    </source>
</evidence>
<evidence type="ECO:0000305" key="9"/>
<keyword id="KW-0025">Alternative splicing</keyword>
<keyword id="KW-1003">Cell membrane</keyword>
<keyword id="KW-0407">Ion channel</keyword>
<keyword id="KW-0406">Ion transport</keyword>
<keyword id="KW-0472">Membrane</keyword>
<keyword id="KW-0597">Phosphoprotein</keyword>
<keyword id="KW-0630">Potassium</keyword>
<keyword id="KW-0631">Potassium channel</keyword>
<keyword id="KW-0633">Potassium transport</keyword>
<keyword id="KW-1185">Reference proteome</keyword>
<keyword id="KW-0812">Transmembrane</keyword>
<keyword id="KW-1133">Transmembrane helix</keyword>
<keyword id="KW-0813">Transport</keyword>
<name>KCNT2_MOUSE</name>
<accession>D3Z649</accession>
<accession>D3YTU6</accession>
<dbReference type="EMBL" id="AC120400">
    <property type="status" value="NOT_ANNOTATED_CDS"/>
    <property type="molecule type" value="Genomic_DNA"/>
</dbReference>
<dbReference type="EMBL" id="AC156607">
    <property type="status" value="NOT_ANNOTATED_CDS"/>
    <property type="molecule type" value="Genomic_DNA"/>
</dbReference>
<dbReference type="EMBL" id="AC156989">
    <property type="status" value="NOT_ANNOTATED_CDS"/>
    <property type="molecule type" value="Genomic_DNA"/>
</dbReference>
<dbReference type="CCDS" id="CCDS48389.1">
    <molecule id="D3Z649-1"/>
</dbReference>
<dbReference type="RefSeq" id="NP_001074496.2">
    <molecule id="D3Z649-1"/>
    <property type="nucleotide sequence ID" value="NM_001081027.3"/>
</dbReference>
<dbReference type="RefSeq" id="XP_006529629.1">
    <molecule id="D3Z649-2"/>
    <property type="nucleotide sequence ID" value="XM_006529566.5"/>
</dbReference>
<dbReference type="SMR" id="D3Z649"/>
<dbReference type="FunCoup" id="D3Z649">
    <property type="interactions" value="502"/>
</dbReference>
<dbReference type="STRING" id="10090.ENSMUSP00000113333"/>
<dbReference type="iPTMnet" id="D3Z649"/>
<dbReference type="PhosphoSitePlus" id="D3Z649"/>
<dbReference type="PaxDb" id="10090-ENSMUSP00000113333"/>
<dbReference type="ProteomicsDB" id="303695"/>
<dbReference type="ProteomicsDB" id="357118"/>
<dbReference type="ABCD" id="D3Z649">
    <property type="antibodies" value="1 sequenced antibody"/>
</dbReference>
<dbReference type="Antibodypedia" id="34469">
    <property type="antibodies" value="176 antibodies from 22 providers"/>
</dbReference>
<dbReference type="Ensembl" id="ENSMUST00000120709.8">
    <molecule id="D3Z649-2"/>
    <property type="protein sequence ID" value="ENSMUSP00000112887.2"/>
    <property type="gene ID" value="ENSMUSG00000052726.17"/>
</dbReference>
<dbReference type="Ensembl" id="ENSMUST00000120796.8">
    <molecule id="D3Z649-1"/>
    <property type="protein sequence ID" value="ENSMUSP00000113333.2"/>
    <property type="gene ID" value="ENSMUSG00000052726.17"/>
</dbReference>
<dbReference type="GeneID" id="240776"/>
<dbReference type="KEGG" id="mmu:240776"/>
<dbReference type="UCSC" id="uc011wth.1">
    <molecule id="D3Z649-1"/>
    <property type="organism name" value="mouse"/>
</dbReference>
<dbReference type="AGR" id="MGI:3036273"/>
<dbReference type="CTD" id="343450"/>
<dbReference type="MGI" id="MGI:3036273">
    <property type="gene designation" value="Kcnt2"/>
</dbReference>
<dbReference type="VEuPathDB" id="HostDB:ENSMUSG00000052726"/>
<dbReference type="eggNOG" id="KOG3193">
    <property type="taxonomic scope" value="Eukaryota"/>
</dbReference>
<dbReference type="GeneTree" id="ENSGT00940000158746"/>
<dbReference type="HOGENOM" id="CLU_003370_0_0_1"/>
<dbReference type="InParanoid" id="D3Z649"/>
<dbReference type="OMA" id="SDVHPTY"/>
<dbReference type="OrthoDB" id="257992at2759"/>
<dbReference type="TreeFam" id="TF314283"/>
<dbReference type="BioGRID-ORCS" id="240776">
    <property type="hits" value="1 hit in 76 CRISPR screens"/>
</dbReference>
<dbReference type="ChiTaRS" id="Kcnt2">
    <property type="organism name" value="mouse"/>
</dbReference>
<dbReference type="Proteomes" id="UP000000589">
    <property type="component" value="Chromosome 1"/>
</dbReference>
<dbReference type="RNAct" id="D3Z649">
    <property type="molecule type" value="protein"/>
</dbReference>
<dbReference type="Bgee" id="ENSMUSG00000052726">
    <property type="expression patterns" value="Expressed in aortic valve and 145 other cell types or tissues"/>
</dbReference>
<dbReference type="ExpressionAtlas" id="D3Z649">
    <property type="expression patterns" value="baseline and differential"/>
</dbReference>
<dbReference type="GO" id="GO:0005886">
    <property type="term" value="C:plasma membrane"/>
    <property type="evidence" value="ECO:0000266"/>
    <property type="project" value="MGI"/>
</dbReference>
<dbReference type="GO" id="GO:0070089">
    <property type="term" value="F:chloride-activated potassium channel activity"/>
    <property type="evidence" value="ECO:0007669"/>
    <property type="project" value="Ensembl"/>
</dbReference>
<dbReference type="GO" id="GO:0005228">
    <property type="term" value="F:intracellular sodium-activated potassium channel activity"/>
    <property type="evidence" value="ECO:0007669"/>
    <property type="project" value="Ensembl"/>
</dbReference>
<dbReference type="GO" id="GO:0005267">
    <property type="term" value="F:potassium channel activity"/>
    <property type="evidence" value="ECO:0000266"/>
    <property type="project" value="MGI"/>
</dbReference>
<dbReference type="GO" id="GO:0097623">
    <property type="term" value="P:potassium ion export across plasma membrane"/>
    <property type="evidence" value="ECO:0007669"/>
    <property type="project" value="Ensembl"/>
</dbReference>
<dbReference type="GO" id="GO:0006813">
    <property type="term" value="P:potassium ion transport"/>
    <property type="evidence" value="ECO:0000266"/>
    <property type="project" value="MGI"/>
</dbReference>
<dbReference type="FunFam" id="3.40.50.720:FF:000011">
    <property type="entry name" value="Potassium channel subfamily T member 1"/>
    <property type="match status" value="1"/>
</dbReference>
<dbReference type="FunFam" id="3.40.50.720:FF:000034">
    <property type="entry name" value="Potassium channel subfamily T member 1"/>
    <property type="match status" value="1"/>
</dbReference>
<dbReference type="FunFam" id="1.10.287.70:FF:000069">
    <property type="entry name" value="Potassium sodium-activated channel subfamily T member 1"/>
    <property type="match status" value="1"/>
</dbReference>
<dbReference type="Gene3D" id="1.10.287.70">
    <property type="match status" value="1"/>
</dbReference>
<dbReference type="Gene3D" id="3.40.50.720">
    <property type="entry name" value="NAD(P)-binding Rossmann-like Domain"/>
    <property type="match status" value="2"/>
</dbReference>
<dbReference type="InterPro" id="IPR003929">
    <property type="entry name" value="K_chnl_BK_asu"/>
</dbReference>
<dbReference type="InterPro" id="IPR013099">
    <property type="entry name" value="K_chnl_dom"/>
</dbReference>
<dbReference type="InterPro" id="IPR047871">
    <property type="entry name" value="K_chnl_Slo-like"/>
</dbReference>
<dbReference type="InterPro" id="IPR036291">
    <property type="entry name" value="NAD(P)-bd_dom_sf"/>
</dbReference>
<dbReference type="InterPro" id="IPR003148">
    <property type="entry name" value="RCK_N"/>
</dbReference>
<dbReference type="PANTHER" id="PTHR10027">
    <property type="entry name" value="CALCIUM-ACTIVATED POTASSIUM CHANNEL ALPHA CHAIN"/>
    <property type="match status" value="1"/>
</dbReference>
<dbReference type="PANTHER" id="PTHR10027:SF9">
    <property type="entry name" value="POTASSIUM CHANNEL SUBFAMILY T MEMBER 2"/>
    <property type="match status" value="1"/>
</dbReference>
<dbReference type="Pfam" id="PF03493">
    <property type="entry name" value="BK_channel_a"/>
    <property type="match status" value="1"/>
</dbReference>
<dbReference type="Pfam" id="PF07885">
    <property type="entry name" value="Ion_trans_2"/>
    <property type="match status" value="1"/>
</dbReference>
<dbReference type="Pfam" id="PF22614">
    <property type="entry name" value="Slo-like_RCK"/>
    <property type="match status" value="2"/>
</dbReference>
<dbReference type="SUPFAM" id="SSF51735">
    <property type="entry name" value="NAD(P)-binding Rossmann-fold domains"/>
    <property type="match status" value="1"/>
</dbReference>
<dbReference type="SUPFAM" id="SSF81324">
    <property type="entry name" value="Voltage-gated potassium channels"/>
    <property type="match status" value="1"/>
</dbReference>
<dbReference type="PROSITE" id="PS51201">
    <property type="entry name" value="RCK_N"/>
    <property type="match status" value="2"/>
</dbReference>
<comment type="function">
    <text evidence="2 7">Sodium-activated and chloride-activated potassium channel. Produces rapidly activating outward rectifier K(+) currents (By similarity). Contributes to regulate neuronal excitability (PubMed:28943756).</text>
</comment>
<comment type="catalytic activity">
    <reaction evidence="2">
        <text>K(+)(in) = K(+)(out)</text>
        <dbReference type="Rhea" id="RHEA:29463"/>
        <dbReference type="ChEBI" id="CHEBI:29103"/>
    </reaction>
</comment>
<comment type="activity regulation">
    <text evidence="2 3">Are normally in a closed state unless activated by an increase in intracellular Na(+) and Cl(-). Inhibited upon stimulation of G-protein coupled receptors, such as CHRM1 and GRM1. There is conflicting data about the effect of ATP on KNCT2 channels activity. Intracellular ATP was initially report to inhibit the channel activity. However, others studies conclude that KNCT2 channels are not inhibited by intracellular ATP.</text>
</comment>
<comment type="subunit">
    <text evidence="1 3 8">Homotetramer (By similarity). Forms heteromeric channels with KCNT1 (PubMed:29124216). These heterodimer channels differ from the homomers in their unitary conductance, kinetic behavior, subcellular localization, and response to activation of protein kinase C (By similarity).</text>
</comment>
<comment type="subcellular location">
    <subcellularLocation>
        <location evidence="8">Cell membrane</location>
        <topology evidence="4">Multi-pass membrane protein</topology>
    </subcellularLocation>
</comment>
<comment type="alternative products">
    <event type="alternative splicing"/>
    <isoform>
        <id>D3Z649-1</id>
        <name>1</name>
        <sequence type="displayed"/>
    </isoform>
    <isoform>
        <id>D3Z649-2</id>
        <name>2</name>
        <sequence type="described" ref="VSP_062362"/>
    </isoform>
</comment>
<comment type="tissue specificity">
    <text evidence="7">Within the dorsal root ganglia (DRGs), exclusively expressed in small-sized and medium-sized calcitonin gene-related peptide (CGRP)-containing DRG neurons.</text>
</comment>
<comment type="domain">
    <text evidence="2">The consensus ATP binding site (1025-GPKHSGKT-1032) seems to be non-functional.</text>
</comment>
<comment type="PTM">
    <text evidence="2">Phosphorylated by protein kinase C. Phosphorylation of the C-terminal domain inhibits channel activity.</text>
</comment>
<comment type="disruption phenotype">
    <text evidence="7">Kcnt2-null mice are hypothermic and show increased basal heat detection and hyperalgesia to thermal nociception compared to controls during neuropathic and chronic inflammatory pain.</text>
</comment>
<comment type="similarity">
    <text evidence="9">Belongs to the potassium channel family. Calcium-activated (TC 1.A.1.3) subfamily. KCa4.2/KCNT2 sub-subfamily.</text>
</comment>
<sequence length="1135" mass="130350">MVDLESEVPPLPPRYRFRDLLLGDQGWQNDDRVQVEFYMNENTFKERLKLFFIKNQRSSLRIRLFNFSLKLLSCLLYIIRVLLEKPSQGSEWSHIFWVNRSLPLWGLQVSVALISLFETILLGYLSYKGNIWEQILRIPFILEIINAVPFIISIFWPTLRNLFVPVFLNCWLAKHALENMINDLHRAIQRTQSAMFNQVLILISTLLCLIFTCICGIQHLERIGKKLNLFDSLYFCIVTFSTVGFGDVTPETWSSKLFVVAMICVALVVLPIQFEQLAYLWMERQKSGGNYSRHRAQTEKHVVLCVSSLKIDLLMDFLNEFYAHPRLQDYYVVILCPTEMDVQVRRVLQIPMWSQRVIYLQGSALKDQDLLRAKMDNAEACFILSSRCEVDRTSSDHQTILRAWAVKDFAPNCPLYVQILKPENKFHIKFADHVVCEEEFKYAMLALNCICPATSTLITLLVHTSRGQEGQQSPEQWQKTYGRCSGNEVYHIVLEESTFFAEYEGKSFTYASFHAHKKFGVCLVGVRREDNKNILLNPGPRYIMNASDICFYINITKEENSAFKNQDQQRKSNVSRSFYHGPSRLPVHSIIASMGTVAIDLQDTSCRATSGPTLALPSEGGKELRRPSIAPVLEVADTSSIQTCDLLSDQSEDETTPDEETSSNLEYAKGYPPYSPYIGSSPTFCHLLQEKVPFCCLRLDKSCQHNYYEDAKAYGFKNKLIIVAAETAGNGLYNFIVPLRAYYRPKKELNPIVLLLDNPPDMHFLDAICWFPMVYYMVGSIDNLDDLLRCGVTFAANMVVVDKESTMSAEEDYMADAKTIVNVQTLFRLFSSLSIITELTHPANMRFMQFRAKDCYSLALSKLEKKERERGSNLAFMFRLPFAAGRVFSISMLDTLLYQSFVKDYMISITRLLLGLDTIPGSGFLCSMKITEDDLWIRTYARLYQKLCSSTGDVPIGIYRTESQKLTTSESQISISVEEWEDTKDVKDPGHHRSLHRNSTSSDQSDHPLLRRKSMQWARRLSRKGPKHSGKTAEKITQQRLNLYRRSERQELAELVKNRMKHLGLSTVGYDEMNDHQSTLSYILINPSPDTRLELNDVVYLIRPDPLSYLPNSEPSRKNSICNAAVQDSREETQL</sequence>
<feature type="chain" id="PRO_0000460611" description="Potassium channel subfamily T member 2">
    <location>
        <begin position="1"/>
        <end position="1135"/>
    </location>
</feature>
<feature type="topological domain" description="Cytoplasmic" evidence="9">
    <location>
        <begin position="1"/>
        <end position="63"/>
    </location>
</feature>
<feature type="transmembrane region" description="Helical; Name=Segment S1" evidence="4">
    <location>
        <begin position="64"/>
        <end position="84"/>
    </location>
</feature>
<feature type="topological domain" description="Extracellular" evidence="9">
    <location>
        <begin position="85"/>
        <end position="101"/>
    </location>
</feature>
<feature type="transmembrane region" description="Helical; Name=Segment S2" evidence="4">
    <location>
        <begin position="102"/>
        <end position="122"/>
    </location>
</feature>
<feature type="topological domain" description="Cytoplasmic" evidence="9">
    <location>
        <begin position="123"/>
        <end position="137"/>
    </location>
</feature>
<feature type="transmembrane region" description="Helical; Name=Segment S3" evidence="4">
    <location>
        <begin position="138"/>
        <end position="158"/>
    </location>
</feature>
<feature type="topological domain" description="Extracellular" evidence="9">
    <location>
        <begin position="159"/>
        <end position="164"/>
    </location>
</feature>
<feature type="transmembrane region" description="Helical; Name=Segment S4" evidence="4">
    <location>
        <begin position="165"/>
        <end position="185"/>
    </location>
</feature>
<feature type="topological domain" description="Cytoplasmic" evidence="9">
    <location>
        <begin position="186"/>
        <end position="198"/>
    </location>
</feature>
<feature type="transmembrane region" description="Helical; Name=Segment S5" evidence="4">
    <location>
        <begin position="199"/>
        <end position="219"/>
    </location>
</feature>
<feature type="topological domain" description="Extracellular" evidence="9">
    <location>
        <begin position="220"/>
        <end position="228"/>
    </location>
</feature>
<feature type="intramembrane region" description="Pore-forming" evidence="4">
    <location>
        <begin position="229"/>
        <end position="249"/>
    </location>
</feature>
<feature type="topological domain" description="Extracellular" evidence="9">
    <location>
        <begin position="250"/>
        <end position="256"/>
    </location>
</feature>
<feature type="transmembrane region" description="Helical; Name=Segment S6" evidence="4">
    <location>
        <begin position="257"/>
        <end position="277"/>
    </location>
</feature>
<feature type="topological domain" description="Cytoplasmic" evidence="9">
    <location>
        <begin position="278"/>
        <end position="1135"/>
    </location>
</feature>
<feature type="domain" description="RCK N-terminal 1" evidence="5">
    <location>
        <begin position="299"/>
        <end position="435"/>
    </location>
</feature>
<feature type="domain" description="RCK N-terminal 2" evidence="5">
    <location>
        <begin position="718"/>
        <end position="858"/>
    </location>
</feature>
<feature type="region of interest" description="Disordered" evidence="6">
    <location>
        <begin position="982"/>
        <end position="1036"/>
    </location>
</feature>
<feature type="region of interest" description="Disordered" evidence="6">
    <location>
        <begin position="1111"/>
        <end position="1135"/>
    </location>
</feature>
<feature type="compositionally biased region" description="Basic residues" evidence="6">
    <location>
        <begin position="1010"/>
        <end position="1030"/>
    </location>
</feature>
<feature type="compositionally biased region" description="Polar residues" evidence="6">
    <location>
        <begin position="1111"/>
        <end position="1122"/>
    </location>
</feature>
<feature type="splice variant" id="VSP_062362" description="In isoform 2.">
    <location>
        <begin position="760"/>
        <end position="783"/>
    </location>
</feature>
<reference key="1">
    <citation type="journal article" date="2009" name="PLoS Biol.">
        <title>Lineage-specific biology revealed by a finished genome assembly of the mouse.</title>
        <authorList>
            <person name="Church D.M."/>
            <person name="Goodstadt L."/>
            <person name="Hillier L.W."/>
            <person name="Zody M.C."/>
            <person name="Goldstein S."/>
            <person name="She X."/>
            <person name="Bult C.J."/>
            <person name="Agarwala R."/>
            <person name="Cherry J.L."/>
            <person name="DiCuccio M."/>
            <person name="Hlavina W."/>
            <person name="Kapustin Y."/>
            <person name="Meric P."/>
            <person name="Maglott D."/>
            <person name="Birtle Z."/>
            <person name="Marques A.C."/>
            <person name="Graves T."/>
            <person name="Zhou S."/>
            <person name="Teague B."/>
            <person name="Potamousis K."/>
            <person name="Churas C."/>
            <person name="Place M."/>
            <person name="Herschleb J."/>
            <person name="Runnheim R."/>
            <person name="Forrest D."/>
            <person name="Amos-Landgraf J."/>
            <person name="Schwartz D.C."/>
            <person name="Cheng Z."/>
            <person name="Lindblad-Toh K."/>
            <person name="Eichler E.E."/>
            <person name="Ponting C.P."/>
        </authorList>
    </citation>
    <scope>NUCLEOTIDE SEQUENCE [LARGE SCALE GENOMIC DNA]</scope>
    <source>
        <strain>C57BL/6J</strain>
    </source>
</reference>
<reference key="2">
    <citation type="journal article" date="2015" name="Biochem. Biophys. Rep.">
        <title>Identification of potential novel interaction partners of the sodium-activated potassium channels Slick and Slack in mouse brain.</title>
        <authorList>
            <person name="Rizzi S."/>
            <person name="Schwarzer C."/>
            <person name="Kremser L."/>
            <person name="Lindner H.H."/>
            <person name="Knaus H.G."/>
        </authorList>
    </citation>
    <scope>INTERACTION WITH KCNT1</scope>
    <scope>SUBCELLULAR LOCATION</scope>
</reference>
<reference key="3">
    <citation type="journal article" date="2017" name="J. Exp. Neurosci.">
        <title>Slick (Kcnt2) Sodium-Activated Potassium Channels Limit Peptidergic Nociceptor Excitability and Hyperalgesia.</title>
        <authorList>
            <person name="Tomasello D.L."/>
            <person name="Hurley E."/>
            <person name="Wrabetz L."/>
            <person name="Bhattacharjee A."/>
        </authorList>
    </citation>
    <scope>DISRUPTION PHENOTYPE</scope>
    <scope>FUNCTION</scope>
    <scope>TISSUE SPECIFICITY</scope>
</reference>
<proteinExistence type="evidence at protein level"/>
<gene>
    <name type="primary">Kcnt2</name>
    <name type="synonym">Slick</name>
    <name type="synonym">Slo2.2</name>
</gene>